<gene>
    <name type="primary">yopX</name>
    <name type="ordered locus">BSU20730</name>
</gene>
<sequence length="134" mass="15194">MNTAYRVWDGEQMHYWDDEGLSLIIKSNGDWTLKRLYTDVLVPVVDSTNRNAALMWGAKVRGKFIYDRSIVKITSDDKESSDVCEVKFSDGVFQVDVSKISADYDVTAVGWVEYATIEVIGDVYQNPELLEGVK</sequence>
<dbReference type="EMBL" id="AL009126">
    <property type="protein sequence ID" value="CAB13965.1"/>
    <property type="molecule type" value="Genomic_DNA"/>
</dbReference>
<dbReference type="RefSeq" id="NP_389955.1">
    <property type="nucleotide sequence ID" value="NC_000964.3"/>
</dbReference>
<dbReference type="RefSeq" id="WP_004399266.1">
    <property type="nucleotide sequence ID" value="NZ_OZ025638.1"/>
</dbReference>
<dbReference type="PDB" id="2I2L">
    <property type="method" value="X-ray"/>
    <property type="resolution" value="2.80 A"/>
    <property type="chains" value="A/B/C=1-134"/>
</dbReference>
<dbReference type="PDBsum" id="2I2L"/>
<dbReference type="SMR" id="O34401"/>
<dbReference type="FunCoup" id="O34401">
    <property type="interactions" value="18"/>
</dbReference>
<dbReference type="STRING" id="224308.BSU20730"/>
<dbReference type="PaxDb" id="224308-BSU20730"/>
<dbReference type="EnsemblBacteria" id="CAB13965">
    <property type="protein sequence ID" value="CAB13965"/>
    <property type="gene ID" value="BSU_20730"/>
</dbReference>
<dbReference type="GeneID" id="939430"/>
<dbReference type="KEGG" id="bsu:BSU20730"/>
<dbReference type="PATRIC" id="fig|224308.179.peg.2263"/>
<dbReference type="InParanoid" id="O34401"/>
<dbReference type="OrthoDB" id="1809393at2"/>
<dbReference type="BioCyc" id="BSUB:BSU20730-MONOMER"/>
<dbReference type="EvolutionaryTrace" id="O34401"/>
<dbReference type="Proteomes" id="UP000001570">
    <property type="component" value="Chromosome"/>
</dbReference>
<dbReference type="Gene3D" id="2.10.70.50">
    <property type="match status" value="1"/>
</dbReference>
<dbReference type="Gene3D" id="2.30.30.100">
    <property type="match status" value="1"/>
</dbReference>
<dbReference type="InterPro" id="IPR019096">
    <property type="entry name" value="YopX_protein"/>
</dbReference>
<dbReference type="Pfam" id="PF09643">
    <property type="entry name" value="YopX"/>
    <property type="match status" value="1"/>
</dbReference>
<dbReference type="SUPFAM" id="SSF159006">
    <property type="entry name" value="YopX-like"/>
    <property type="match status" value="1"/>
</dbReference>
<evidence type="ECO:0000305" key="1"/>
<evidence type="ECO:0007829" key="2">
    <source>
        <dbReference type="PDB" id="2I2L"/>
    </source>
</evidence>
<protein>
    <recommendedName>
        <fullName>SPbeta prophage-derived uncharacterized protein YopX</fullName>
    </recommendedName>
</protein>
<organism>
    <name type="scientific">Bacillus subtilis (strain 168)</name>
    <dbReference type="NCBI Taxonomy" id="224308"/>
    <lineage>
        <taxon>Bacteria</taxon>
        <taxon>Bacillati</taxon>
        <taxon>Bacillota</taxon>
        <taxon>Bacilli</taxon>
        <taxon>Bacillales</taxon>
        <taxon>Bacillaceae</taxon>
        <taxon>Bacillus</taxon>
    </lineage>
</organism>
<keyword id="KW-0002">3D-structure</keyword>
<keyword id="KW-1185">Reference proteome</keyword>
<accession>O34401</accession>
<proteinExistence type="evidence at protein level"/>
<feature type="chain" id="PRO_0000360000" description="SPbeta prophage-derived uncharacterized protein YopX">
    <location>
        <begin position="1"/>
        <end position="134"/>
    </location>
</feature>
<feature type="strand" evidence="2">
    <location>
        <begin position="5"/>
        <end position="8"/>
    </location>
</feature>
<feature type="strand" evidence="2">
    <location>
        <begin position="10"/>
        <end position="15"/>
    </location>
</feature>
<feature type="strand" evidence="2">
    <location>
        <begin position="22"/>
        <end position="25"/>
    </location>
</feature>
<feature type="strand" evidence="2">
    <location>
        <begin position="31"/>
        <end position="46"/>
    </location>
</feature>
<feature type="strand" evidence="2">
    <location>
        <begin position="53"/>
        <end position="56"/>
    </location>
</feature>
<feature type="strand" evidence="2">
    <location>
        <begin position="58"/>
        <end position="60"/>
    </location>
</feature>
<feature type="strand" evidence="2">
    <location>
        <begin position="63"/>
        <end position="65"/>
    </location>
</feature>
<feature type="strand" evidence="2">
    <location>
        <begin position="67"/>
        <end position="79"/>
    </location>
</feature>
<feature type="strand" evidence="2">
    <location>
        <begin position="83"/>
        <end position="85"/>
    </location>
</feature>
<feature type="strand" evidence="2">
    <location>
        <begin position="87"/>
        <end position="89"/>
    </location>
</feature>
<feature type="strand" evidence="2">
    <location>
        <begin position="92"/>
        <end position="96"/>
    </location>
</feature>
<feature type="strand" evidence="2">
    <location>
        <begin position="106"/>
        <end position="108"/>
    </location>
</feature>
<feature type="helix" evidence="2">
    <location>
        <begin position="109"/>
        <end position="111"/>
    </location>
</feature>
<feature type="strand" evidence="2">
    <location>
        <begin position="114"/>
        <end position="122"/>
    </location>
</feature>
<feature type="turn" evidence="2">
    <location>
        <begin position="123"/>
        <end position="125"/>
    </location>
</feature>
<reference key="1">
    <citation type="journal article" date="1997" name="Nature">
        <title>The complete genome sequence of the Gram-positive bacterium Bacillus subtilis.</title>
        <authorList>
            <person name="Kunst F."/>
            <person name="Ogasawara N."/>
            <person name="Moszer I."/>
            <person name="Albertini A.M."/>
            <person name="Alloni G."/>
            <person name="Azevedo V."/>
            <person name="Bertero M.G."/>
            <person name="Bessieres P."/>
            <person name="Bolotin A."/>
            <person name="Borchert S."/>
            <person name="Borriss R."/>
            <person name="Boursier L."/>
            <person name="Brans A."/>
            <person name="Braun M."/>
            <person name="Brignell S.C."/>
            <person name="Bron S."/>
            <person name="Brouillet S."/>
            <person name="Bruschi C.V."/>
            <person name="Caldwell B."/>
            <person name="Capuano V."/>
            <person name="Carter N.M."/>
            <person name="Choi S.-K."/>
            <person name="Codani J.-J."/>
            <person name="Connerton I.F."/>
            <person name="Cummings N.J."/>
            <person name="Daniel R.A."/>
            <person name="Denizot F."/>
            <person name="Devine K.M."/>
            <person name="Duesterhoeft A."/>
            <person name="Ehrlich S.D."/>
            <person name="Emmerson P.T."/>
            <person name="Entian K.-D."/>
            <person name="Errington J."/>
            <person name="Fabret C."/>
            <person name="Ferrari E."/>
            <person name="Foulger D."/>
            <person name="Fritz C."/>
            <person name="Fujita M."/>
            <person name="Fujita Y."/>
            <person name="Fuma S."/>
            <person name="Galizzi A."/>
            <person name="Galleron N."/>
            <person name="Ghim S.-Y."/>
            <person name="Glaser P."/>
            <person name="Goffeau A."/>
            <person name="Golightly E.J."/>
            <person name="Grandi G."/>
            <person name="Guiseppi G."/>
            <person name="Guy B.J."/>
            <person name="Haga K."/>
            <person name="Haiech J."/>
            <person name="Harwood C.R."/>
            <person name="Henaut A."/>
            <person name="Hilbert H."/>
            <person name="Holsappel S."/>
            <person name="Hosono S."/>
            <person name="Hullo M.-F."/>
            <person name="Itaya M."/>
            <person name="Jones L.-M."/>
            <person name="Joris B."/>
            <person name="Karamata D."/>
            <person name="Kasahara Y."/>
            <person name="Klaerr-Blanchard M."/>
            <person name="Klein C."/>
            <person name="Kobayashi Y."/>
            <person name="Koetter P."/>
            <person name="Koningstein G."/>
            <person name="Krogh S."/>
            <person name="Kumano M."/>
            <person name="Kurita K."/>
            <person name="Lapidus A."/>
            <person name="Lardinois S."/>
            <person name="Lauber J."/>
            <person name="Lazarevic V."/>
            <person name="Lee S.-M."/>
            <person name="Levine A."/>
            <person name="Liu H."/>
            <person name="Masuda S."/>
            <person name="Mauel C."/>
            <person name="Medigue C."/>
            <person name="Medina N."/>
            <person name="Mellado R.P."/>
            <person name="Mizuno M."/>
            <person name="Moestl D."/>
            <person name="Nakai S."/>
            <person name="Noback M."/>
            <person name="Noone D."/>
            <person name="O'Reilly M."/>
            <person name="Ogawa K."/>
            <person name="Ogiwara A."/>
            <person name="Oudega B."/>
            <person name="Park S.-H."/>
            <person name="Parro V."/>
            <person name="Pohl T.M."/>
            <person name="Portetelle D."/>
            <person name="Porwollik S."/>
            <person name="Prescott A.M."/>
            <person name="Presecan E."/>
            <person name="Pujic P."/>
            <person name="Purnelle B."/>
            <person name="Rapoport G."/>
            <person name="Rey M."/>
            <person name="Reynolds S."/>
            <person name="Rieger M."/>
            <person name="Rivolta C."/>
            <person name="Rocha E."/>
            <person name="Roche B."/>
            <person name="Rose M."/>
            <person name="Sadaie Y."/>
            <person name="Sato T."/>
            <person name="Scanlan E."/>
            <person name="Schleich S."/>
            <person name="Schroeter R."/>
            <person name="Scoffone F."/>
            <person name="Sekiguchi J."/>
            <person name="Sekowska A."/>
            <person name="Seror S.J."/>
            <person name="Serror P."/>
            <person name="Shin B.-S."/>
            <person name="Soldo B."/>
            <person name="Sorokin A."/>
            <person name="Tacconi E."/>
            <person name="Takagi T."/>
            <person name="Takahashi H."/>
            <person name="Takemaru K."/>
            <person name="Takeuchi M."/>
            <person name="Tamakoshi A."/>
            <person name="Tanaka T."/>
            <person name="Terpstra P."/>
            <person name="Tognoni A."/>
            <person name="Tosato V."/>
            <person name="Uchiyama S."/>
            <person name="Vandenbol M."/>
            <person name="Vannier F."/>
            <person name="Vassarotti A."/>
            <person name="Viari A."/>
            <person name="Wambutt R."/>
            <person name="Wedler E."/>
            <person name="Wedler H."/>
            <person name="Weitzenegger T."/>
            <person name="Winters P."/>
            <person name="Wipat A."/>
            <person name="Yamamoto H."/>
            <person name="Yamane K."/>
            <person name="Yasumoto K."/>
            <person name="Yata K."/>
            <person name="Yoshida K."/>
            <person name="Yoshikawa H.-F."/>
            <person name="Zumstein E."/>
            <person name="Yoshikawa H."/>
            <person name="Danchin A."/>
        </authorList>
    </citation>
    <scope>NUCLEOTIDE SEQUENCE [LARGE SCALE GENOMIC DNA]</scope>
    <source>
        <strain>168</strain>
    </source>
</reference>
<reference key="2">
    <citation type="submission" date="2006-08" db="PDB data bank">
        <title>Crystal structure of the hypothetical protein yopX from Bacillus subtilis.</title>
        <authorList>
            <consortium name="Northeast structural genomics consortium (NESG)"/>
        </authorList>
    </citation>
    <scope>X-RAY CRYSTALLOGRAPHY (2.8 ANGSTROMS)</scope>
    <scope>SUBUNIT</scope>
</reference>
<name>YOPX_BACSU</name>
<comment type="subunit">
    <text evidence="1">Homodimer.</text>
</comment>